<feature type="chain" id="PRO_0000186529" description="PTS system glucose-specific EIICB component">
    <location>
        <begin position="1"/>
        <end position="477"/>
    </location>
</feature>
<feature type="topological domain" description="Cytoplasmic" evidence="2">
    <location>
        <begin position="1"/>
        <end position="14"/>
    </location>
</feature>
<feature type="transmembrane region" description="Helical" evidence="4">
    <location>
        <begin position="15"/>
        <end position="35"/>
    </location>
</feature>
<feature type="topological domain" description="Periplasmic" evidence="2">
    <location>
        <begin position="36"/>
        <end position="50"/>
    </location>
</feature>
<feature type="transmembrane region" description="Helical" evidence="4">
    <location>
        <begin position="51"/>
        <end position="71"/>
    </location>
</feature>
<feature type="topological domain" description="Cytoplasmic" evidence="2">
    <location>
        <begin position="72"/>
        <end position="79"/>
    </location>
</feature>
<feature type="transmembrane region" description="Helical" evidence="4">
    <location>
        <begin position="80"/>
        <end position="100"/>
    </location>
</feature>
<feature type="topological domain" description="Periplasmic" evidence="2">
    <location>
        <begin position="101"/>
        <end position="111"/>
    </location>
</feature>
<feature type="transmembrane region" description="Helical" evidence="4">
    <location>
        <begin position="112"/>
        <end position="132"/>
    </location>
</feature>
<feature type="topological domain" description="Cytoplasmic" evidence="2">
    <location>
        <begin position="133"/>
        <end position="151"/>
    </location>
</feature>
<feature type="transmembrane region" description="Helical" evidence="4">
    <location>
        <begin position="152"/>
        <end position="172"/>
    </location>
</feature>
<feature type="topological domain" description="Periplasmic" evidence="2">
    <location>
        <begin position="173"/>
        <end position="190"/>
    </location>
</feature>
<feature type="transmembrane region" description="Helical" evidence="4">
    <location>
        <begin position="191"/>
        <end position="211"/>
    </location>
</feature>
<feature type="topological domain" description="Cytoplasmic" evidence="2">
    <location>
        <begin position="212"/>
        <end position="249"/>
    </location>
</feature>
<feature type="transmembrane region" description="Helical" evidence="4">
    <location>
        <begin position="250"/>
        <end position="270"/>
    </location>
</feature>
<feature type="topological domain" description="Periplasmic" evidence="2">
    <location>
        <begin position="271"/>
        <end position="279"/>
    </location>
</feature>
<feature type="transmembrane region" description="Helical" evidence="4">
    <location>
        <begin position="280"/>
        <end position="300"/>
    </location>
</feature>
<feature type="topological domain" description="Cytoplasmic" evidence="2">
    <location>
        <begin position="301"/>
        <end position="309"/>
    </location>
</feature>
<feature type="transmembrane region" description="Helical" evidence="4">
    <location>
        <begin position="310"/>
        <end position="330"/>
    </location>
</feature>
<feature type="topological domain" description="Periplasmic" evidence="2">
    <location>
        <begin position="331"/>
        <end position="355"/>
    </location>
</feature>
<feature type="transmembrane region" description="Helical" evidence="4">
    <location>
        <begin position="356"/>
        <end position="376"/>
    </location>
</feature>
<feature type="topological domain" description="Cytoplasmic" evidence="2">
    <location>
        <begin position="377"/>
        <end position="477"/>
    </location>
</feature>
<feature type="domain" description="PTS EIIC type-1" evidence="4">
    <location>
        <begin position="1"/>
        <end position="388"/>
    </location>
</feature>
<feature type="domain" description="PTS EIIB type-1" evidence="3">
    <location>
        <begin position="399"/>
        <end position="477"/>
    </location>
</feature>
<feature type="active site" description="Phosphocysteinsyse intermediate; for EIIB activity" evidence="1 3">
    <location>
        <position position="421"/>
    </location>
</feature>
<feature type="modified residue" description="Phosphocysteine" evidence="1">
    <location>
        <position position="421"/>
    </location>
</feature>
<gene>
    <name type="primary">ptsG</name>
    <name type="ordered locus">c1373</name>
</gene>
<comment type="function">
    <text evidence="1">The phosphoenolpyruvate-dependent sugar phosphotransferase system (sugar PTS), a major carbohydrate active transport system, catalyzes the phosphorylation of incoming sugar substrates concomitantly with their translocation across the cell membrane. The enzyme II complex composed of PtsG and Crr is involved in glucose transport. Also functions as a chemoreceptor monitoring the environment for changes in sugar concentration.</text>
</comment>
<comment type="catalytic activity">
    <reaction evidence="1">
        <text>N(pros)-phospho-L-histidyl-[protein] + D-glucose(out) = D-glucose 6-phosphate(in) + L-histidyl-[protein]</text>
        <dbReference type="Rhea" id="RHEA:33367"/>
        <dbReference type="Rhea" id="RHEA-COMP:9745"/>
        <dbReference type="Rhea" id="RHEA-COMP:9746"/>
        <dbReference type="ChEBI" id="CHEBI:4167"/>
        <dbReference type="ChEBI" id="CHEBI:29979"/>
        <dbReference type="ChEBI" id="CHEBI:61548"/>
        <dbReference type="ChEBI" id="CHEBI:64837"/>
        <dbReference type="EC" id="2.7.1.199"/>
    </reaction>
</comment>
<comment type="subcellular location">
    <subcellularLocation>
        <location evidence="4">Cell inner membrane</location>
        <topology evidence="4">Multi-pass membrane protein</topology>
    </subcellularLocation>
</comment>
<comment type="domain">
    <text evidence="3">The EIIB domain is phosphorylated by phospho-EIIA on a cysteinyl or histidyl residue, depending on the transported sugar. Then, it transfers the phosphoryl group to the sugar substrate concomitantly with the sugar uptake processed by the EIIC domain.</text>
</comment>
<comment type="domain">
    <text evidence="4">The EIIC domain forms the PTS system translocation channel and contains the specific substrate-binding site.</text>
</comment>
<protein>
    <recommendedName>
        <fullName evidence="1">PTS system glucose-specific EIICB component</fullName>
    </recommendedName>
    <alternativeName>
        <fullName evidence="1">EIICB-Glc</fullName>
        <shortName evidence="1">EII-Glc</shortName>
    </alternativeName>
    <domain>
        <recommendedName>
            <fullName evidence="1">Glucose permease IIC component</fullName>
        </recommendedName>
        <alternativeName>
            <fullName evidence="1">PTS system glucose-specific EIIC component</fullName>
        </alternativeName>
    </domain>
    <domain>
        <recommendedName>
            <fullName evidence="1">Glucose-specific phosphotransferase enzyme IIB component</fullName>
            <ecNumber evidence="1">2.7.1.199</ecNumber>
        </recommendedName>
        <alternativeName>
            <fullName evidence="1">PTS system glucose-specific EIIB component</fullName>
        </alternativeName>
    </domain>
</protein>
<organism>
    <name type="scientific">Escherichia coli O6:H1 (strain CFT073 / ATCC 700928 / UPEC)</name>
    <dbReference type="NCBI Taxonomy" id="199310"/>
    <lineage>
        <taxon>Bacteria</taxon>
        <taxon>Pseudomonadati</taxon>
        <taxon>Pseudomonadota</taxon>
        <taxon>Gammaproteobacteria</taxon>
        <taxon>Enterobacterales</taxon>
        <taxon>Enterobacteriaceae</taxon>
        <taxon>Escherichia</taxon>
    </lineage>
</organism>
<proteinExistence type="inferred from homology"/>
<evidence type="ECO:0000250" key="1">
    <source>
        <dbReference type="UniProtKB" id="P69786"/>
    </source>
</evidence>
<evidence type="ECO:0000255" key="2"/>
<evidence type="ECO:0000255" key="3">
    <source>
        <dbReference type="PROSITE-ProRule" id="PRU00421"/>
    </source>
</evidence>
<evidence type="ECO:0000255" key="4">
    <source>
        <dbReference type="PROSITE-ProRule" id="PRU00426"/>
    </source>
</evidence>
<dbReference type="EC" id="2.7.1.199" evidence="1"/>
<dbReference type="EMBL" id="AE014075">
    <property type="protein sequence ID" value="AAN79843.1"/>
    <property type="molecule type" value="Genomic_DNA"/>
</dbReference>
<dbReference type="RefSeq" id="WP_000475719.1">
    <property type="nucleotide sequence ID" value="NZ_CP051263.1"/>
</dbReference>
<dbReference type="SMR" id="P69787"/>
<dbReference type="STRING" id="199310.c1373"/>
<dbReference type="GeneID" id="93776307"/>
<dbReference type="KEGG" id="ecc:c1373"/>
<dbReference type="eggNOG" id="COG1263">
    <property type="taxonomic scope" value="Bacteria"/>
</dbReference>
<dbReference type="eggNOG" id="COG1264">
    <property type="taxonomic scope" value="Bacteria"/>
</dbReference>
<dbReference type="HOGENOM" id="CLU_012312_1_0_6"/>
<dbReference type="BioCyc" id="ECOL199310:C1373-MONOMER"/>
<dbReference type="Proteomes" id="UP000001410">
    <property type="component" value="Chromosome"/>
</dbReference>
<dbReference type="GO" id="GO:0005886">
    <property type="term" value="C:plasma membrane"/>
    <property type="evidence" value="ECO:0007669"/>
    <property type="project" value="UniProtKB-SubCell"/>
</dbReference>
<dbReference type="GO" id="GO:0055056">
    <property type="term" value="F:D-glucose transmembrane transporter activity"/>
    <property type="evidence" value="ECO:0007669"/>
    <property type="project" value="InterPro"/>
</dbReference>
<dbReference type="GO" id="GO:0016301">
    <property type="term" value="F:kinase activity"/>
    <property type="evidence" value="ECO:0007669"/>
    <property type="project" value="UniProtKB-KW"/>
</dbReference>
<dbReference type="GO" id="GO:0008982">
    <property type="term" value="F:protein-N(PI)-phosphohistidine-sugar phosphotransferase activity"/>
    <property type="evidence" value="ECO:0007669"/>
    <property type="project" value="InterPro"/>
</dbReference>
<dbReference type="GO" id="GO:0090564">
    <property type="term" value="F:protein-phosphocysteine-glucose phosphotransferase system transporter activity"/>
    <property type="evidence" value="ECO:0007669"/>
    <property type="project" value="TreeGrafter"/>
</dbReference>
<dbReference type="GO" id="GO:1904659">
    <property type="term" value="P:D-glucose transmembrane transport"/>
    <property type="evidence" value="ECO:0007669"/>
    <property type="project" value="InterPro"/>
</dbReference>
<dbReference type="GO" id="GO:0009401">
    <property type="term" value="P:phosphoenolpyruvate-dependent sugar phosphotransferase system"/>
    <property type="evidence" value="ECO:0007669"/>
    <property type="project" value="UniProtKB-KW"/>
</dbReference>
<dbReference type="CDD" id="cd00212">
    <property type="entry name" value="PTS_IIB_glc"/>
    <property type="match status" value="1"/>
</dbReference>
<dbReference type="FunFam" id="3.30.1360.60:FF:000001">
    <property type="entry name" value="PTS system glucose-specific IIBC component PtsG"/>
    <property type="match status" value="1"/>
</dbReference>
<dbReference type="Gene3D" id="3.30.1360.60">
    <property type="entry name" value="Glucose permease domain IIB"/>
    <property type="match status" value="1"/>
</dbReference>
<dbReference type="InterPro" id="IPR036878">
    <property type="entry name" value="Glu_permease_IIB"/>
</dbReference>
<dbReference type="InterPro" id="IPR018113">
    <property type="entry name" value="PTrfase_EIIB_Cys"/>
</dbReference>
<dbReference type="InterPro" id="IPR003352">
    <property type="entry name" value="PTS_EIIC"/>
</dbReference>
<dbReference type="InterPro" id="IPR013013">
    <property type="entry name" value="PTS_EIIC_1"/>
</dbReference>
<dbReference type="InterPro" id="IPR050429">
    <property type="entry name" value="PTS_Glucose_EIICBA"/>
</dbReference>
<dbReference type="InterPro" id="IPR001996">
    <property type="entry name" value="PTS_IIB_1"/>
</dbReference>
<dbReference type="InterPro" id="IPR011299">
    <property type="entry name" value="PTS_IIBC_glc"/>
</dbReference>
<dbReference type="InterPro" id="IPR004719">
    <property type="entry name" value="PTS_maltose/Glc_sub_IIC"/>
</dbReference>
<dbReference type="NCBIfam" id="TIGR00826">
    <property type="entry name" value="EIIB_glc"/>
    <property type="match status" value="1"/>
</dbReference>
<dbReference type="NCBIfam" id="NF008301">
    <property type="entry name" value="PRK11089.1"/>
    <property type="match status" value="1"/>
</dbReference>
<dbReference type="NCBIfam" id="TIGR00852">
    <property type="entry name" value="pts-Glc"/>
    <property type="match status" value="1"/>
</dbReference>
<dbReference type="NCBIfam" id="TIGR02002">
    <property type="entry name" value="PTS-II-BC-glcB"/>
    <property type="match status" value="1"/>
</dbReference>
<dbReference type="PANTHER" id="PTHR30009">
    <property type="entry name" value="CYTOCHROME C-TYPE SYNTHESIS PROTEIN AND PTS TRANSMEMBRANE COMPONENT"/>
    <property type="match status" value="1"/>
</dbReference>
<dbReference type="PANTHER" id="PTHR30009:SF20">
    <property type="entry name" value="PTS SYSTEM GLUCOSE-SPECIFIC EIICB COMPONENT-RELATED"/>
    <property type="match status" value="1"/>
</dbReference>
<dbReference type="Pfam" id="PF00367">
    <property type="entry name" value="PTS_EIIB"/>
    <property type="match status" value="1"/>
</dbReference>
<dbReference type="Pfam" id="PF02378">
    <property type="entry name" value="PTS_EIIC"/>
    <property type="match status" value="1"/>
</dbReference>
<dbReference type="SUPFAM" id="SSF55604">
    <property type="entry name" value="Glucose permease domain IIB"/>
    <property type="match status" value="1"/>
</dbReference>
<dbReference type="PROSITE" id="PS51098">
    <property type="entry name" value="PTS_EIIB_TYPE_1"/>
    <property type="match status" value="1"/>
</dbReference>
<dbReference type="PROSITE" id="PS01035">
    <property type="entry name" value="PTS_EIIB_TYPE_1_CYS"/>
    <property type="match status" value="1"/>
</dbReference>
<dbReference type="PROSITE" id="PS51103">
    <property type="entry name" value="PTS_EIIC_TYPE_1"/>
    <property type="match status" value="1"/>
</dbReference>
<sequence length="477" mass="50677">MFKNAFANLQKVGKSLMLPVSVLPIAGILLGVGSANFSWLPAVVSHVMAEAGGSVFANMPLIFAIGVALGFTNNDGVSALAAVVAYGIMVKTMAVVAPLVLHLPAEEIASKHLADTGVLGGIISGAIAAYMFNRFYRIKLPEYLGFFAGKRFVPIISGLAAIFTGVVLSFIWPPIGSAIQTFSQWAAYQNPVVAFGIYGFIERCLVPFGLHHIWNVPFQMQIGEYTNAAGQVFHGDIPRYMAGDPTAGKLSGGFLFKMYGLPAAAIAIWHSAKPENRAKVGGIMISAALTSFLTGITEPIEFSFMFVAPILYIIHAILAGLAFPICILLGMRDGTSFSHGLIDFIVLSGNSSKLWLFPIVGIGYAIVYYTIFRVLIKALDLKTPGREDATEDAKATGTSEMAPALVAAFGGKENITNLDACITRLRVSVADVSKVDQAGLKKLGAAGVVVAGSGVQAIFGTKSDNLKTEMDEYIRNH</sequence>
<accession>P69787</accession>
<accession>P05053</accession>
<name>PTGCB_ECOL6</name>
<keyword id="KW-0997">Cell inner membrane</keyword>
<keyword id="KW-1003">Cell membrane</keyword>
<keyword id="KW-0418">Kinase</keyword>
<keyword id="KW-0472">Membrane</keyword>
<keyword id="KW-0597">Phosphoprotein</keyword>
<keyword id="KW-0598">Phosphotransferase system</keyword>
<keyword id="KW-1185">Reference proteome</keyword>
<keyword id="KW-0762">Sugar transport</keyword>
<keyword id="KW-0808">Transferase</keyword>
<keyword id="KW-0812">Transmembrane</keyword>
<keyword id="KW-1133">Transmembrane helix</keyword>
<keyword id="KW-0813">Transport</keyword>
<reference key="1">
    <citation type="journal article" date="2002" name="Proc. Natl. Acad. Sci. U.S.A.">
        <title>Extensive mosaic structure revealed by the complete genome sequence of uropathogenic Escherichia coli.</title>
        <authorList>
            <person name="Welch R.A."/>
            <person name="Burland V."/>
            <person name="Plunkett G. III"/>
            <person name="Redford P."/>
            <person name="Roesch P."/>
            <person name="Rasko D."/>
            <person name="Buckles E.L."/>
            <person name="Liou S.-R."/>
            <person name="Boutin A."/>
            <person name="Hackett J."/>
            <person name="Stroud D."/>
            <person name="Mayhew G.F."/>
            <person name="Rose D.J."/>
            <person name="Zhou S."/>
            <person name="Schwartz D.C."/>
            <person name="Perna N.T."/>
            <person name="Mobley H.L.T."/>
            <person name="Donnenberg M.S."/>
            <person name="Blattner F.R."/>
        </authorList>
    </citation>
    <scope>NUCLEOTIDE SEQUENCE [LARGE SCALE GENOMIC DNA]</scope>
    <source>
        <strain>CFT073 / ATCC 700928 / UPEC</strain>
    </source>
</reference>